<accession>C0MB46</accession>
<proteinExistence type="inferred from homology"/>
<keyword id="KW-0687">Ribonucleoprotein</keyword>
<keyword id="KW-0689">Ribosomal protein</keyword>
<keyword id="KW-0694">RNA-binding</keyword>
<keyword id="KW-0699">rRNA-binding</keyword>
<feature type="chain" id="PRO_1000165425" description="Small ribosomal subunit protein uS4">
    <location>
        <begin position="1"/>
        <end position="203"/>
    </location>
</feature>
<feature type="domain" description="S4 RNA-binding" evidence="1">
    <location>
        <begin position="93"/>
        <end position="156"/>
    </location>
</feature>
<dbReference type="EMBL" id="FM204883">
    <property type="protein sequence ID" value="CAW95600.1"/>
    <property type="molecule type" value="Genomic_DNA"/>
</dbReference>
<dbReference type="RefSeq" id="WP_012516485.1">
    <property type="nucleotide sequence ID" value="NC_012471.1"/>
</dbReference>
<dbReference type="SMR" id="C0MB46"/>
<dbReference type="GeneID" id="83705814"/>
<dbReference type="KEGG" id="seu:SEQ_2201"/>
<dbReference type="HOGENOM" id="CLU_092403_0_1_9"/>
<dbReference type="OrthoDB" id="9803672at2"/>
<dbReference type="Proteomes" id="UP000001365">
    <property type="component" value="Chromosome"/>
</dbReference>
<dbReference type="GO" id="GO:0015935">
    <property type="term" value="C:small ribosomal subunit"/>
    <property type="evidence" value="ECO:0007669"/>
    <property type="project" value="InterPro"/>
</dbReference>
<dbReference type="GO" id="GO:0019843">
    <property type="term" value="F:rRNA binding"/>
    <property type="evidence" value="ECO:0007669"/>
    <property type="project" value="UniProtKB-UniRule"/>
</dbReference>
<dbReference type="GO" id="GO:0003735">
    <property type="term" value="F:structural constituent of ribosome"/>
    <property type="evidence" value="ECO:0007669"/>
    <property type="project" value="InterPro"/>
</dbReference>
<dbReference type="GO" id="GO:0042274">
    <property type="term" value="P:ribosomal small subunit biogenesis"/>
    <property type="evidence" value="ECO:0007669"/>
    <property type="project" value="TreeGrafter"/>
</dbReference>
<dbReference type="GO" id="GO:0006412">
    <property type="term" value="P:translation"/>
    <property type="evidence" value="ECO:0007669"/>
    <property type="project" value="UniProtKB-UniRule"/>
</dbReference>
<dbReference type="CDD" id="cd00165">
    <property type="entry name" value="S4"/>
    <property type="match status" value="1"/>
</dbReference>
<dbReference type="FunFam" id="1.10.1050.10:FF:000001">
    <property type="entry name" value="30S ribosomal protein S4"/>
    <property type="match status" value="1"/>
</dbReference>
<dbReference type="FunFam" id="3.10.290.10:FF:000001">
    <property type="entry name" value="30S ribosomal protein S4"/>
    <property type="match status" value="1"/>
</dbReference>
<dbReference type="Gene3D" id="1.10.1050.10">
    <property type="entry name" value="Ribosomal Protein S4 Delta 41, Chain A, domain 1"/>
    <property type="match status" value="1"/>
</dbReference>
<dbReference type="Gene3D" id="3.10.290.10">
    <property type="entry name" value="RNA-binding S4 domain"/>
    <property type="match status" value="1"/>
</dbReference>
<dbReference type="HAMAP" id="MF_01306_B">
    <property type="entry name" value="Ribosomal_uS4_B"/>
    <property type="match status" value="1"/>
</dbReference>
<dbReference type="InterPro" id="IPR022801">
    <property type="entry name" value="Ribosomal_uS4"/>
</dbReference>
<dbReference type="InterPro" id="IPR005709">
    <property type="entry name" value="Ribosomal_uS4_bac-type"/>
</dbReference>
<dbReference type="InterPro" id="IPR018079">
    <property type="entry name" value="Ribosomal_uS4_CS"/>
</dbReference>
<dbReference type="InterPro" id="IPR001912">
    <property type="entry name" value="Ribosomal_uS4_N"/>
</dbReference>
<dbReference type="InterPro" id="IPR002942">
    <property type="entry name" value="S4_RNA-bd"/>
</dbReference>
<dbReference type="InterPro" id="IPR036986">
    <property type="entry name" value="S4_RNA-bd_sf"/>
</dbReference>
<dbReference type="NCBIfam" id="NF003717">
    <property type="entry name" value="PRK05327.1"/>
    <property type="match status" value="1"/>
</dbReference>
<dbReference type="NCBIfam" id="TIGR01017">
    <property type="entry name" value="rpsD_bact"/>
    <property type="match status" value="1"/>
</dbReference>
<dbReference type="PANTHER" id="PTHR11831">
    <property type="entry name" value="30S 40S RIBOSOMAL PROTEIN"/>
    <property type="match status" value="1"/>
</dbReference>
<dbReference type="PANTHER" id="PTHR11831:SF4">
    <property type="entry name" value="SMALL RIBOSOMAL SUBUNIT PROTEIN US4M"/>
    <property type="match status" value="1"/>
</dbReference>
<dbReference type="Pfam" id="PF00163">
    <property type="entry name" value="Ribosomal_S4"/>
    <property type="match status" value="1"/>
</dbReference>
<dbReference type="Pfam" id="PF01479">
    <property type="entry name" value="S4"/>
    <property type="match status" value="1"/>
</dbReference>
<dbReference type="SMART" id="SM01390">
    <property type="entry name" value="Ribosomal_S4"/>
    <property type="match status" value="1"/>
</dbReference>
<dbReference type="SMART" id="SM00363">
    <property type="entry name" value="S4"/>
    <property type="match status" value="1"/>
</dbReference>
<dbReference type="SUPFAM" id="SSF55174">
    <property type="entry name" value="Alpha-L RNA-binding motif"/>
    <property type="match status" value="1"/>
</dbReference>
<dbReference type="PROSITE" id="PS00632">
    <property type="entry name" value="RIBOSOMAL_S4"/>
    <property type="match status" value="1"/>
</dbReference>
<dbReference type="PROSITE" id="PS50889">
    <property type="entry name" value="S4"/>
    <property type="match status" value="1"/>
</dbReference>
<evidence type="ECO:0000255" key="1">
    <source>
        <dbReference type="HAMAP-Rule" id="MF_01306"/>
    </source>
</evidence>
<evidence type="ECO:0000305" key="2"/>
<gene>
    <name evidence="1" type="primary">rpsD</name>
    <name type="ordered locus">SEQ_2201</name>
</gene>
<sequence length="203" mass="23169">MSRYTGPSWKQSRRLGLSLTGTGKELARRNYVPGQHGPNNRSKLSEYGLQLAEKQKLRFSYGMGEKQFRNLFVQATKIKEGTLGFNFMLLLERRLDNVVYRLGLATTRRQARQFVNHGHILVDGKRVDIPSFRVEIGQVISVREKSMKVPAILEAVEATLGRPAFVSFDAEKLEGSLTRLPERDEINPEINEALVVEFYNKML</sequence>
<comment type="function">
    <text evidence="1">One of the primary rRNA binding proteins, it binds directly to 16S rRNA where it nucleates assembly of the body of the 30S subunit.</text>
</comment>
<comment type="function">
    <text evidence="1">With S5 and S12 plays an important role in translational accuracy.</text>
</comment>
<comment type="subunit">
    <text evidence="1">Part of the 30S ribosomal subunit. Contacts protein S5. The interaction surface between S4 and S5 is involved in control of translational fidelity.</text>
</comment>
<comment type="similarity">
    <text evidence="1">Belongs to the universal ribosomal protein uS4 family.</text>
</comment>
<name>RS4_STRE4</name>
<organism>
    <name type="scientific">Streptococcus equi subsp. equi (strain 4047)</name>
    <dbReference type="NCBI Taxonomy" id="553482"/>
    <lineage>
        <taxon>Bacteria</taxon>
        <taxon>Bacillati</taxon>
        <taxon>Bacillota</taxon>
        <taxon>Bacilli</taxon>
        <taxon>Lactobacillales</taxon>
        <taxon>Streptococcaceae</taxon>
        <taxon>Streptococcus</taxon>
    </lineage>
</organism>
<protein>
    <recommendedName>
        <fullName evidence="1">Small ribosomal subunit protein uS4</fullName>
    </recommendedName>
    <alternativeName>
        <fullName evidence="2">30S ribosomal protein S4</fullName>
    </alternativeName>
</protein>
<reference key="1">
    <citation type="journal article" date="2009" name="PLoS Pathog.">
        <title>Genomic evidence for the evolution of Streptococcus equi: host restriction, increased virulence, and genetic exchange with human pathogens.</title>
        <authorList>
            <person name="Holden M.T.G."/>
            <person name="Heather Z."/>
            <person name="Paillot R."/>
            <person name="Steward K.F."/>
            <person name="Webb K."/>
            <person name="Ainslie F."/>
            <person name="Jourdan T."/>
            <person name="Bason N.C."/>
            <person name="Holroyd N.E."/>
            <person name="Mungall K."/>
            <person name="Quail M.A."/>
            <person name="Sanders M."/>
            <person name="Simmonds M."/>
            <person name="Willey D."/>
            <person name="Brooks K."/>
            <person name="Aanensen D.M."/>
            <person name="Spratt B.G."/>
            <person name="Jolley K.A."/>
            <person name="Maiden M.C.J."/>
            <person name="Kehoe M."/>
            <person name="Chanter N."/>
            <person name="Bentley S.D."/>
            <person name="Robinson C."/>
            <person name="Maskell D.J."/>
            <person name="Parkhill J."/>
            <person name="Waller A.S."/>
        </authorList>
    </citation>
    <scope>NUCLEOTIDE SEQUENCE [LARGE SCALE GENOMIC DNA]</scope>
    <source>
        <strain>4047</strain>
    </source>
</reference>